<feature type="chain" id="PRO_0000046623" description="C-type lectin domain family 4 member F">
    <location>
        <begin position="1"/>
        <end position="548"/>
    </location>
</feature>
<feature type="topological domain" description="Cytoplasmic" evidence="1">
    <location>
        <begin position="1"/>
        <end position="42"/>
    </location>
</feature>
<feature type="transmembrane region" description="Helical; Signal-anchor for type II membrane protein" evidence="1">
    <location>
        <begin position="43"/>
        <end position="69"/>
    </location>
</feature>
<feature type="topological domain" description="Extracellular" evidence="1">
    <location>
        <begin position="70"/>
        <end position="548"/>
    </location>
</feature>
<feature type="domain" description="C-type lectin" evidence="2">
    <location>
        <begin position="438"/>
        <end position="538"/>
    </location>
</feature>
<feature type="glycosylation site" description="N-linked (GlcNAc...) asparagine" evidence="1">
    <location>
        <position position="86"/>
    </location>
</feature>
<feature type="glycosylation site" description="N-linked (GlcNAc...) asparagine" evidence="1">
    <location>
        <position position="92"/>
    </location>
</feature>
<feature type="glycosylation site" description="N-linked (GlcNAc...) asparagine" evidence="1">
    <location>
        <position position="115"/>
    </location>
</feature>
<feature type="glycosylation site" description="N-linked (GlcNAc...) asparagine" evidence="1">
    <location>
        <position position="132"/>
    </location>
</feature>
<feature type="glycosylation site" description="N-linked (GlcNAc...) asparagine" evidence="1">
    <location>
        <position position="209"/>
    </location>
</feature>
<feature type="glycosylation site" description="N-linked (GlcNAc...) asparagine" evidence="1">
    <location>
        <position position="255"/>
    </location>
</feature>
<feature type="disulfide bond" evidence="2">
    <location>
        <begin position="440"/>
        <end position="536"/>
    </location>
</feature>
<feature type="disulfide bond" evidence="2">
    <location>
        <begin position="516"/>
        <end position="528"/>
    </location>
</feature>
<feature type="sequence conflict" description="In Ref. 2; BAC30671." evidence="3" ref="2">
    <original>T</original>
    <variation>S</variation>
    <location>
        <position position="366"/>
    </location>
</feature>
<feature type="helix" evidence="4">
    <location>
        <begin position="397"/>
        <end position="413"/>
    </location>
</feature>
<feature type="strand" evidence="4">
    <location>
        <begin position="417"/>
        <end position="419"/>
    </location>
</feature>
<feature type="strand" evidence="4">
    <location>
        <begin position="422"/>
        <end position="426"/>
    </location>
</feature>
<feature type="helix" evidence="4">
    <location>
        <begin position="433"/>
        <end position="442"/>
    </location>
</feature>
<feature type="helix" evidence="4">
    <location>
        <begin position="453"/>
        <end position="463"/>
    </location>
</feature>
<feature type="strand" evidence="4">
    <location>
        <begin position="468"/>
        <end position="473"/>
    </location>
</feature>
<feature type="strand" evidence="4">
    <location>
        <begin position="476"/>
        <end position="479"/>
    </location>
</feature>
<feature type="strand" evidence="4">
    <location>
        <begin position="482"/>
        <end position="486"/>
    </location>
</feature>
<feature type="strand" evidence="4">
    <location>
        <begin position="490"/>
        <end position="493"/>
    </location>
</feature>
<feature type="strand" evidence="4">
    <location>
        <begin position="496"/>
        <end position="498"/>
    </location>
</feature>
<feature type="strand" evidence="4">
    <location>
        <begin position="509"/>
        <end position="511"/>
    </location>
</feature>
<feature type="strand" evidence="4">
    <location>
        <begin position="516"/>
        <end position="526"/>
    </location>
</feature>
<feature type="strand" evidence="4">
    <location>
        <begin position="534"/>
        <end position="539"/>
    </location>
</feature>
<comment type="function">
    <text>Receptor with an affinity for galactose and fucose. Could be involved in endocytosis.</text>
</comment>
<comment type="subcellular location">
    <subcellularLocation>
        <location>Membrane</location>
        <topology>Single-pass type II membrane protein</topology>
    </subcellularLocation>
</comment>
<comment type="tissue specificity">
    <text>Kupffer cells.</text>
</comment>
<comment type="online information" name="Functional Glycomics Gateway - Glycan Binding">
    <link uri="http://www.functionalglycomics.org/glycomics/GBPServlet?&amp;operationType=view&amp;cbpId=cbp_mou_Ctlect_166"/>
    <text>Kupffer cell receptor</text>
</comment>
<evidence type="ECO:0000255" key="1"/>
<evidence type="ECO:0000255" key="2">
    <source>
        <dbReference type="PROSITE-ProRule" id="PRU00040"/>
    </source>
</evidence>
<evidence type="ECO:0000305" key="3"/>
<evidence type="ECO:0007829" key="4">
    <source>
        <dbReference type="PDB" id="6JJJ"/>
    </source>
</evidence>
<keyword id="KW-0002">3D-structure</keyword>
<keyword id="KW-1015">Disulfide bond</keyword>
<keyword id="KW-0254">Endocytosis</keyword>
<keyword id="KW-0325">Glycoprotein</keyword>
<keyword id="KW-0430">Lectin</keyword>
<keyword id="KW-0472">Membrane</keyword>
<keyword id="KW-0675">Receptor</keyword>
<keyword id="KW-1185">Reference proteome</keyword>
<keyword id="KW-0735">Signal-anchor</keyword>
<keyword id="KW-0812">Transmembrane</keyword>
<keyword id="KW-1133">Transmembrane helix</keyword>
<dbReference type="EMBL" id="D88577">
    <property type="protein sequence ID" value="BAA13647.1"/>
    <property type="molecule type" value="mRNA"/>
</dbReference>
<dbReference type="EMBL" id="AK040696">
    <property type="protein sequence ID" value="BAC30671.1"/>
    <property type="molecule type" value="mRNA"/>
</dbReference>
<dbReference type="EMBL" id="BC013647">
    <property type="protein sequence ID" value="AAH13647.1"/>
    <property type="molecule type" value="mRNA"/>
</dbReference>
<dbReference type="CCDS" id="CCDS20281.1"/>
<dbReference type="RefSeq" id="NP_058031.2">
    <property type="nucleotide sequence ID" value="NM_016751.3"/>
</dbReference>
<dbReference type="PDB" id="6JJJ">
    <property type="method" value="X-ray"/>
    <property type="resolution" value="2.79 A"/>
    <property type="chains" value="A/B/C/D/E/F=389-548"/>
</dbReference>
<dbReference type="PDBsum" id="6JJJ"/>
<dbReference type="SMR" id="P70194"/>
<dbReference type="FunCoup" id="P70194">
    <property type="interactions" value="294"/>
</dbReference>
<dbReference type="STRING" id="10090.ENSMUSP00000014686"/>
<dbReference type="UniLectin" id="P70194"/>
<dbReference type="GlyCosmos" id="P70194">
    <property type="glycosylation" value="6 sites, No reported glycans"/>
</dbReference>
<dbReference type="GlyGen" id="P70194">
    <property type="glycosylation" value="6 sites"/>
</dbReference>
<dbReference type="iPTMnet" id="P70194"/>
<dbReference type="PhosphoSitePlus" id="P70194"/>
<dbReference type="SwissPalm" id="P70194"/>
<dbReference type="CPTAC" id="non-CPTAC-3567"/>
<dbReference type="jPOST" id="P70194"/>
<dbReference type="PaxDb" id="10090-ENSMUSP00000014686"/>
<dbReference type="PeptideAtlas" id="P70194"/>
<dbReference type="ProteomicsDB" id="285468"/>
<dbReference type="ABCD" id="P70194">
    <property type="antibodies" value="24 sequenced antibodies"/>
</dbReference>
<dbReference type="DNASU" id="51811"/>
<dbReference type="GeneID" id="51811"/>
<dbReference type="KEGG" id="mmu:51811"/>
<dbReference type="UCSC" id="uc009cnv.1">
    <property type="organism name" value="mouse"/>
</dbReference>
<dbReference type="AGR" id="MGI:1859834"/>
<dbReference type="CTD" id="165530"/>
<dbReference type="MGI" id="MGI:1859834">
    <property type="gene designation" value="Clec4f"/>
</dbReference>
<dbReference type="eggNOG" id="KOG4297">
    <property type="taxonomic scope" value="Eukaryota"/>
</dbReference>
<dbReference type="InParanoid" id="P70194"/>
<dbReference type="OrthoDB" id="2142683at2759"/>
<dbReference type="PhylomeDB" id="P70194"/>
<dbReference type="TreeFam" id="TF333341"/>
<dbReference type="BioGRID-ORCS" id="51811">
    <property type="hits" value="5 hits in 78 CRISPR screens"/>
</dbReference>
<dbReference type="PRO" id="PR:P70194"/>
<dbReference type="Proteomes" id="UP000000589">
    <property type="component" value="Unplaced"/>
</dbReference>
<dbReference type="RNAct" id="P70194">
    <property type="molecule type" value="protein"/>
</dbReference>
<dbReference type="GO" id="GO:0005886">
    <property type="term" value="C:plasma membrane"/>
    <property type="evidence" value="ECO:0000314"/>
    <property type="project" value="MGI"/>
</dbReference>
<dbReference type="GO" id="GO:0005534">
    <property type="term" value="F:galactose binding"/>
    <property type="evidence" value="ECO:0000314"/>
    <property type="project" value="MGI"/>
</dbReference>
<dbReference type="GO" id="GO:0051861">
    <property type="term" value="F:glycolipid binding"/>
    <property type="evidence" value="ECO:0000314"/>
    <property type="project" value="MGI"/>
</dbReference>
<dbReference type="GO" id="GO:0006897">
    <property type="term" value="P:endocytosis"/>
    <property type="evidence" value="ECO:0007669"/>
    <property type="project" value="UniProtKB-KW"/>
</dbReference>
<dbReference type="GO" id="GO:0051132">
    <property type="term" value="P:NK T cell activation"/>
    <property type="evidence" value="ECO:0000315"/>
    <property type="project" value="MGI"/>
</dbReference>
<dbReference type="CDD" id="cd03590">
    <property type="entry name" value="CLECT_DC-SIGN_like"/>
    <property type="match status" value="1"/>
</dbReference>
<dbReference type="FunFam" id="1.20.5.170:FF:000180">
    <property type="entry name" value="C-type lectin domain family 4 member F"/>
    <property type="match status" value="1"/>
</dbReference>
<dbReference type="FunFam" id="1.20.5.170:FF:000181">
    <property type="entry name" value="C-type lectin domain family 4 member F"/>
    <property type="match status" value="1"/>
</dbReference>
<dbReference type="Gene3D" id="1.20.5.170">
    <property type="match status" value="5"/>
</dbReference>
<dbReference type="Gene3D" id="3.10.100.10">
    <property type="entry name" value="Mannose-Binding Protein A, subunit A"/>
    <property type="match status" value="1"/>
</dbReference>
<dbReference type="InterPro" id="IPR001304">
    <property type="entry name" value="C-type_lectin-like"/>
</dbReference>
<dbReference type="InterPro" id="IPR016186">
    <property type="entry name" value="C-type_lectin-like/link_sf"/>
</dbReference>
<dbReference type="InterPro" id="IPR050111">
    <property type="entry name" value="C-type_lectin/snaclec_domain"/>
</dbReference>
<dbReference type="InterPro" id="IPR018378">
    <property type="entry name" value="C-type_lectin_CS"/>
</dbReference>
<dbReference type="InterPro" id="IPR033989">
    <property type="entry name" value="CD209-like_CTLD"/>
</dbReference>
<dbReference type="InterPro" id="IPR016187">
    <property type="entry name" value="CTDL_fold"/>
</dbReference>
<dbReference type="PANTHER" id="PTHR22803">
    <property type="entry name" value="MANNOSE, PHOSPHOLIPASE, LECTIN RECEPTOR RELATED"/>
    <property type="match status" value="1"/>
</dbReference>
<dbReference type="Pfam" id="PF00059">
    <property type="entry name" value="Lectin_C"/>
    <property type="match status" value="1"/>
</dbReference>
<dbReference type="SMART" id="SM00034">
    <property type="entry name" value="CLECT"/>
    <property type="match status" value="1"/>
</dbReference>
<dbReference type="SUPFAM" id="SSF56436">
    <property type="entry name" value="C-type lectin-like"/>
    <property type="match status" value="1"/>
</dbReference>
<dbReference type="SUPFAM" id="SSF57997">
    <property type="entry name" value="Tropomyosin"/>
    <property type="match status" value="1"/>
</dbReference>
<dbReference type="PROSITE" id="PS00615">
    <property type="entry name" value="C_TYPE_LECTIN_1"/>
    <property type="match status" value="1"/>
</dbReference>
<dbReference type="PROSITE" id="PS50041">
    <property type="entry name" value="C_TYPE_LECTIN_2"/>
    <property type="match status" value="1"/>
</dbReference>
<accession>P70194</accession>
<accession>Q8BLZ8</accession>
<name>CLC4F_MOUSE</name>
<proteinExistence type="evidence at protein level"/>
<organism>
    <name type="scientific">Mus musculus</name>
    <name type="common">Mouse</name>
    <dbReference type="NCBI Taxonomy" id="10090"/>
    <lineage>
        <taxon>Eukaryota</taxon>
        <taxon>Metazoa</taxon>
        <taxon>Chordata</taxon>
        <taxon>Craniata</taxon>
        <taxon>Vertebrata</taxon>
        <taxon>Euteleostomi</taxon>
        <taxon>Mammalia</taxon>
        <taxon>Eutheria</taxon>
        <taxon>Euarchontoglires</taxon>
        <taxon>Glires</taxon>
        <taxon>Rodentia</taxon>
        <taxon>Myomorpha</taxon>
        <taxon>Muroidea</taxon>
        <taxon>Muridae</taxon>
        <taxon>Murinae</taxon>
        <taxon>Mus</taxon>
        <taxon>Mus</taxon>
    </lineage>
</organism>
<gene>
    <name type="primary">Clec4f</name>
    <name type="synonym">Clecsf13</name>
    <name type="synonym">Kclr</name>
</gene>
<reference key="1">
    <citation type="submission" date="1996-11" db="EMBL/GenBank/DDBJ databases">
        <authorList>
            <person name="Takezawa R."/>
            <person name="Wagatsuma H."/>
            <person name="Nomoto C."/>
            <person name="Watanabe Y."/>
            <person name="Akaike T."/>
        </authorList>
    </citation>
    <scope>NUCLEOTIDE SEQUENCE [MRNA]</scope>
    <source>
        <strain>BALB/cJ</strain>
        <tissue>Liver</tissue>
    </source>
</reference>
<reference key="2">
    <citation type="journal article" date="2005" name="Science">
        <title>The transcriptional landscape of the mammalian genome.</title>
        <authorList>
            <person name="Carninci P."/>
            <person name="Kasukawa T."/>
            <person name="Katayama S."/>
            <person name="Gough J."/>
            <person name="Frith M.C."/>
            <person name="Maeda N."/>
            <person name="Oyama R."/>
            <person name="Ravasi T."/>
            <person name="Lenhard B."/>
            <person name="Wells C."/>
            <person name="Kodzius R."/>
            <person name="Shimokawa K."/>
            <person name="Bajic V.B."/>
            <person name="Brenner S.E."/>
            <person name="Batalov S."/>
            <person name="Forrest A.R."/>
            <person name="Zavolan M."/>
            <person name="Davis M.J."/>
            <person name="Wilming L.G."/>
            <person name="Aidinis V."/>
            <person name="Allen J.E."/>
            <person name="Ambesi-Impiombato A."/>
            <person name="Apweiler R."/>
            <person name="Aturaliya R.N."/>
            <person name="Bailey T.L."/>
            <person name="Bansal M."/>
            <person name="Baxter L."/>
            <person name="Beisel K.W."/>
            <person name="Bersano T."/>
            <person name="Bono H."/>
            <person name="Chalk A.M."/>
            <person name="Chiu K.P."/>
            <person name="Choudhary V."/>
            <person name="Christoffels A."/>
            <person name="Clutterbuck D.R."/>
            <person name="Crowe M.L."/>
            <person name="Dalla E."/>
            <person name="Dalrymple B.P."/>
            <person name="de Bono B."/>
            <person name="Della Gatta G."/>
            <person name="di Bernardo D."/>
            <person name="Down T."/>
            <person name="Engstrom P."/>
            <person name="Fagiolini M."/>
            <person name="Faulkner G."/>
            <person name="Fletcher C.F."/>
            <person name="Fukushima T."/>
            <person name="Furuno M."/>
            <person name="Futaki S."/>
            <person name="Gariboldi M."/>
            <person name="Georgii-Hemming P."/>
            <person name="Gingeras T.R."/>
            <person name="Gojobori T."/>
            <person name="Green R.E."/>
            <person name="Gustincich S."/>
            <person name="Harbers M."/>
            <person name="Hayashi Y."/>
            <person name="Hensch T.K."/>
            <person name="Hirokawa N."/>
            <person name="Hill D."/>
            <person name="Huminiecki L."/>
            <person name="Iacono M."/>
            <person name="Ikeo K."/>
            <person name="Iwama A."/>
            <person name="Ishikawa T."/>
            <person name="Jakt M."/>
            <person name="Kanapin A."/>
            <person name="Katoh M."/>
            <person name="Kawasawa Y."/>
            <person name="Kelso J."/>
            <person name="Kitamura H."/>
            <person name="Kitano H."/>
            <person name="Kollias G."/>
            <person name="Krishnan S.P."/>
            <person name="Kruger A."/>
            <person name="Kummerfeld S.K."/>
            <person name="Kurochkin I.V."/>
            <person name="Lareau L.F."/>
            <person name="Lazarevic D."/>
            <person name="Lipovich L."/>
            <person name="Liu J."/>
            <person name="Liuni S."/>
            <person name="McWilliam S."/>
            <person name="Madan Babu M."/>
            <person name="Madera M."/>
            <person name="Marchionni L."/>
            <person name="Matsuda H."/>
            <person name="Matsuzawa S."/>
            <person name="Miki H."/>
            <person name="Mignone F."/>
            <person name="Miyake S."/>
            <person name="Morris K."/>
            <person name="Mottagui-Tabar S."/>
            <person name="Mulder N."/>
            <person name="Nakano N."/>
            <person name="Nakauchi H."/>
            <person name="Ng P."/>
            <person name="Nilsson R."/>
            <person name="Nishiguchi S."/>
            <person name="Nishikawa S."/>
            <person name="Nori F."/>
            <person name="Ohara O."/>
            <person name="Okazaki Y."/>
            <person name="Orlando V."/>
            <person name="Pang K.C."/>
            <person name="Pavan W.J."/>
            <person name="Pavesi G."/>
            <person name="Pesole G."/>
            <person name="Petrovsky N."/>
            <person name="Piazza S."/>
            <person name="Reed J."/>
            <person name="Reid J.F."/>
            <person name="Ring B.Z."/>
            <person name="Ringwald M."/>
            <person name="Rost B."/>
            <person name="Ruan Y."/>
            <person name="Salzberg S.L."/>
            <person name="Sandelin A."/>
            <person name="Schneider C."/>
            <person name="Schoenbach C."/>
            <person name="Sekiguchi K."/>
            <person name="Semple C.A."/>
            <person name="Seno S."/>
            <person name="Sessa L."/>
            <person name="Sheng Y."/>
            <person name="Shibata Y."/>
            <person name="Shimada H."/>
            <person name="Shimada K."/>
            <person name="Silva D."/>
            <person name="Sinclair B."/>
            <person name="Sperling S."/>
            <person name="Stupka E."/>
            <person name="Sugiura K."/>
            <person name="Sultana R."/>
            <person name="Takenaka Y."/>
            <person name="Taki K."/>
            <person name="Tammoja K."/>
            <person name="Tan S.L."/>
            <person name="Tang S."/>
            <person name="Taylor M.S."/>
            <person name="Tegner J."/>
            <person name="Teichmann S.A."/>
            <person name="Ueda H.R."/>
            <person name="van Nimwegen E."/>
            <person name="Verardo R."/>
            <person name="Wei C.L."/>
            <person name="Yagi K."/>
            <person name="Yamanishi H."/>
            <person name="Zabarovsky E."/>
            <person name="Zhu S."/>
            <person name="Zimmer A."/>
            <person name="Hide W."/>
            <person name="Bult C."/>
            <person name="Grimmond S.M."/>
            <person name="Teasdale R.D."/>
            <person name="Liu E.T."/>
            <person name="Brusic V."/>
            <person name="Quackenbush J."/>
            <person name="Wahlestedt C."/>
            <person name="Mattick J.S."/>
            <person name="Hume D.A."/>
            <person name="Kai C."/>
            <person name="Sasaki D."/>
            <person name="Tomaru Y."/>
            <person name="Fukuda S."/>
            <person name="Kanamori-Katayama M."/>
            <person name="Suzuki M."/>
            <person name="Aoki J."/>
            <person name="Arakawa T."/>
            <person name="Iida J."/>
            <person name="Imamura K."/>
            <person name="Itoh M."/>
            <person name="Kato T."/>
            <person name="Kawaji H."/>
            <person name="Kawagashira N."/>
            <person name="Kawashima T."/>
            <person name="Kojima M."/>
            <person name="Kondo S."/>
            <person name="Konno H."/>
            <person name="Nakano K."/>
            <person name="Ninomiya N."/>
            <person name="Nishio T."/>
            <person name="Okada M."/>
            <person name="Plessy C."/>
            <person name="Shibata K."/>
            <person name="Shiraki T."/>
            <person name="Suzuki S."/>
            <person name="Tagami M."/>
            <person name="Waki K."/>
            <person name="Watahiki A."/>
            <person name="Okamura-Oho Y."/>
            <person name="Suzuki H."/>
            <person name="Kawai J."/>
            <person name="Hayashizaki Y."/>
        </authorList>
    </citation>
    <scope>NUCLEOTIDE SEQUENCE [LARGE SCALE MRNA]</scope>
    <source>
        <strain>C57BL/6J</strain>
        <tissue>Aorta</tissue>
    </source>
</reference>
<reference key="3">
    <citation type="journal article" date="2004" name="Genome Res.">
        <title>The status, quality, and expansion of the NIH full-length cDNA project: the Mammalian Gene Collection (MGC).</title>
        <authorList>
            <consortium name="The MGC Project Team"/>
        </authorList>
    </citation>
    <scope>NUCLEOTIDE SEQUENCE [LARGE SCALE MRNA]</scope>
    <source>
        <strain>FVB/N</strain>
        <tissue>Liver</tissue>
    </source>
</reference>
<reference key="4">
    <citation type="journal article" date="2010" name="Cell">
        <title>A tissue-specific atlas of mouse protein phosphorylation and expression.</title>
        <authorList>
            <person name="Huttlin E.L."/>
            <person name="Jedrychowski M.P."/>
            <person name="Elias J.E."/>
            <person name="Goswami T."/>
            <person name="Rad R."/>
            <person name="Beausoleil S.A."/>
            <person name="Villen J."/>
            <person name="Haas W."/>
            <person name="Sowa M.E."/>
            <person name="Gygi S.P."/>
        </authorList>
    </citation>
    <scope>IDENTIFICATION BY MASS SPECTROMETRY [LARGE SCALE ANALYSIS]</scope>
    <source>
        <tissue>Liver</tissue>
    </source>
</reference>
<sequence>MKEAELNRDMARYCTDNQCVSLQPQGLGPKSAALMAPRTLRHVQVILALMVVTVIFSLLALFVVASQPWRPEWNKEPPSLLLRGSNNSGHDNHSQFVRETEMQVAIQRLRDYEENSSSCHKEVQILKYQMDNVSSLVQLLGSHLEDVNADILQTKDVLKESGALALETQALRSSLEVASADIHSLRGDLEKANAMTSQTRGLLKSSTENTSAELHVLGRGLEEAQSEIQALRGSLQSANDLSSQTQGFLQHSMDNISAQIQTVRDGMERAGEKMNSLKKELETLTAQTQKANGHLEQTDAQIQGLKAELKSTSSLNSRIEVVNGQMKDASRELQTLRRDLSDVSALKSNVQMLQSNLQRAKTEMQTLKADLQATKALTAKIQGEQNRLGALQEAVAAQKQEQKTQNQVLQLIAQNWKYFNGNFYYFSRDKKPWREAEKFCTSQGAHLASVTSQEEQAFLVQTTSSGDHWIGLTDQGTEGIWRWVDGTPFNNAQSKGFWGKNQPDNWRHRNGEREDCVHVRQQWNDMACGSSYPWVCKKSTGWSAARVG</sequence>
<protein>
    <recommendedName>
        <fullName>C-type lectin domain family 4 member F</fullName>
    </recommendedName>
    <alternativeName>
        <fullName>C-type lectin superfamily member 13</fullName>
        <shortName>C-type lectin 13</shortName>
    </alternativeName>
    <alternativeName>
        <fullName>Kupffer cell receptor</fullName>
    </alternativeName>
</protein>